<accession>Q607X6</accession>
<gene>
    <name evidence="1" type="primary">cobB</name>
    <name type="ordered locus">MCA1627</name>
</gene>
<dbReference type="EC" id="2.3.1.286" evidence="1 2"/>
<dbReference type="EMBL" id="AE017282">
    <property type="protein sequence ID" value="AAU92364.1"/>
    <property type="molecule type" value="Genomic_DNA"/>
</dbReference>
<dbReference type="RefSeq" id="WP_010960886.1">
    <property type="nucleotide sequence ID" value="NC_002977.6"/>
</dbReference>
<dbReference type="SMR" id="Q607X6"/>
<dbReference type="STRING" id="243233.MCA1627"/>
<dbReference type="GeneID" id="88223883"/>
<dbReference type="KEGG" id="mca:MCA1627"/>
<dbReference type="eggNOG" id="COG0846">
    <property type="taxonomic scope" value="Bacteria"/>
</dbReference>
<dbReference type="HOGENOM" id="CLU_023643_3_1_6"/>
<dbReference type="Proteomes" id="UP000006821">
    <property type="component" value="Chromosome"/>
</dbReference>
<dbReference type="GO" id="GO:0005737">
    <property type="term" value="C:cytoplasm"/>
    <property type="evidence" value="ECO:0007669"/>
    <property type="project" value="UniProtKB-SubCell"/>
</dbReference>
<dbReference type="GO" id="GO:0017136">
    <property type="term" value="F:histone deacetylase activity, NAD-dependent"/>
    <property type="evidence" value="ECO:0007669"/>
    <property type="project" value="TreeGrafter"/>
</dbReference>
<dbReference type="GO" id="GO:0070403">
    <property type="term" value="F:NAD+ binding"/>
    <property type="evidence" value="ECO:0007669"/>
    <property type="project" value="UniProtKB-UniRule"/>
</dbReference>
<dbReference type="GO" id="GO:0036054">
    <property type="term" value="F:protein-malonyllysine demalonylase activity"/>
    <property type="evidence" value="ECO:0007669"/>
    <property type="project" value="InterPro"/>
</dbReference>
<dbReference type="GO" id="GO:0036055">
    <property type="term" value="F:protein-succinyllysine desuccinylase activity"/>
    <property type="evidence" value="ECO:0007669"/>
    <property type="project" value="UniProtKB-UniRule"/>
</dbReference>
<dbReference type="GO" id="GO:0008270">
    <property type="term" value="F:zinc ion binding"/>
    <property type="evidence" value="ECO:0007669"/>
    <property type="project" value="UniProtKB-UniRule"/>
</dbReference>
<dbReference type="Gene3D" id="3.30.1600.10">
    <property type="entry name" value="SIR2/SIRT2 'Small Domain"/>
    <property type="match status" value="1"/>
</dbReference>
<dbReference type="Gene3D" id="3.40.50.1220">
    <property type="entry name" value="TPP-binding domain"/>
    <property type="match status" value="1"/>
</dbReference>
<dbReference type="HAMAP" id="MF_01121">
    <property type="entry name" value="Sirtuin_ClassIII"/>
    <property type="match status" value="1"/>
</dbReference>
<dbReference type="InterPro" id="IPR029035">
    <property type="entry name" value="DHS-like_NAD/FAD-binding_dom"/>
</dbReference>
<dbReference type="InterPro" id="IPR050134">
    <property type="entry name" value="NAD-dep_sirtuin_deacylases"/>
</dbReference>
<dbReference type="InterPro" id="IPR003000">
    <property type="entry name" value="Sirtuin"/>
</dbReference>
<dbReference type="InterPro" id="IPR026591">
    <property type="entry name" value="Sirtuin_cat_small_dom_sf"/>
</dbReference>
<dbReference type="InterPro" id="IPR027546">
    <property type="entry name" value="Sirtuin_class_III"/>
</dbReference>
<dbReference type="InterPro" id="IPR026590">
    <property type="entry name" value="Ssirtuin_cat_dom"/>
</dbReference>
<dbReference type="NCBIfam" id="NF001753">
    <property type="entry name" value="PRK00481.1-3"/>
    <property type="match status" value="1"/>
</dbReference>
<dbReference type="PANTHER" id="PTHR11085">
    <property type="entry name" value="NAD-DEPENDENT PROTEIN DEACYLASE SIRTUIN-5, MITOCHONDRIAL-RELATED"/>
    <property type="match status" value="1"/>
</dbReference>
<dbReference type="PANTHER" id="PTHR11085:SF10">
    <property type="entry name" value="NAD-DEPENDENT PROTEIN DEACYLASE SIRTUIN-5, MITOCHONDRIAL-RELATED"/>
    <property type="match status" value="1"/>
</dbReference>
<dbReference type="Pfam" id="PF02146">
    <property type="entry name" value="SIR2"/>
    <property type="match status" value="1"/>
</dbReference>
<dbReference type="SUPFAM" id="SSF52467">
    <property type="entry name" value="DHS-like NAD/FAD-binding domain"/>
    <property type="match status" value="1"/>
</dbReference>
<dbReference type="PROSITE" id="PS50305">
    <property type="entry name" value="SIRTUIN"/>
    <property type="match status" value="1"/>
</dbReference>
<sequence length="255" mass="27494">MEFSDELLASLRDARHIAVFTGAGVSAESGIPTFRDALTGFWENYDASTLASPEGFAADPALVWGWYEWRRTRVLRAEPNPAHYAIAALAADCPRLTLITQNVDDLHERAGSADPIRLHGSLHHPRCSACEAPYRLPPGIPDEPEGGRRVDPPRCARCGAPVRPGVVWLGENLPQAAWDAARQAAEDCDLMFSIGTSALVWPAAQLPALVARRGATVVQVNPAETALDGHAGYNLRGAAGKVMPLLLQALRRSRP</sequence>
<comment type="function">
    <text evidence="1">NAD-dependent lysine deacetylase and desuccinylase that specifically removes acetyl and succinyl groups on target proteins. Modulates the activities of several proteins which are inactive in their acylated form.</text>
</comment>
<comment type="catalytic activity">
    <reaction evidence="1">
        <text>N(6)-acetyl-L-lysyl-[protein] + NAD(+) + H2O = 2''-O-acetyl-ADP-D-ribose + nicotinamide + L-lysyl-[protein]</text>
        <dbReference type="Rhea" id="RHEA:43636"/>
        <dbReference type="Rhea" id="RHEA-COMP:9752"/>
        <dbReference type="Rhea" id="RHEA-COMP:10731"/>
        <dbReference type="ChEBI" id="CHEBI:15377"/>
        <dbReference type="ChEBI" id="CHEBI:17154"/>
        <dbReference type="ChEBI" id="CHEBI:29969"/>
        <dbReference type="ChEBI" id="CHEBI:57540"/>
        <dbReference type="ChEBI" id="CHEBI:61930"/>
        <dbReference type="ChEBI" id="CHEBI:83767"/>
        <dbReference type="EC" id="2.3.1.286"/>
    </reaction>
</comment>
<comment type="catalytic activity">
    <reaction evidence="1">
        <text>N(6)-succinyl-L-lysyl-[protein] + NAD(+) + H2O = 2''-O-succinyl-ADP-D-ribose + nicotinamide + L-lysyl-[protein]</text>
        <dbReference type="Rhea" id="RHEA:47668"/>
        <dbReference type="Rhea" id="RHEA-COMP:9752"/>
        <dbReference type="Rhea" id="RHEA-COMP:11877"/>
        <dbReference type="ChEBI" id="CHEBI:15377"/>
        <dbReference type="ChEBI" id="CHEBI:17154"/>
        <dbReference type="ChEBI" id="CHEBI:29969"/>
        <dbReference type="ChEBI" id="CHEBI:57540"/>
        <dbReference type="ChEBI" id="CHEBI:87830"/>
        <dbReference type="ChEBI" id="CHEBI:87832"/>
    </reaction>
</comment>
<comment type="cofactor">
    <cofactor evidence="1">
        <name>Zn(2+)</name>
        <dbReference type="ChEBI" id="CHEBI:29105"/>
    </cofactor>
    <text evidence="1">Binds 1 zinc ion per subunit.</text>
</comment>
<comment type="subcellular location">
    <subcellularLocation>
        <location evidence="1">Cytoplasm</location>
    </subcellularLocation>
</comment>
<comment type="domain">
    <text evidence="1">2 residues (Tyr-67 and Arg-70) present in a large hydrophobic pocket are probably involved in substrate specificity. They are important for desuccinylation activity, but dispensable for deacetylation activity.</text>
</comment>
<comment type="similarity">
    <text evidence="1">Belongs to the sirtuin family. Class III subfamily.</text>
</comment>
<protein>
    <recommendedName>
        <fullName evidence="1">NAD-dependent protein deacylase</fullName>
        <ecNumber evidence="1 2">2.3.1.286</ecNumber>
    </recommendedName>
    <alternativeName>
        <fullName evidence="1">Regulatory protein SIR2 homolog</fullName>
    </alternativeName>
</protein>
<reference key="1">
    <citation type="journal article" date="2004" name="PLoS Biol.">
        <title>Genomic insights into methanotrophy: the complete genome sequence of Methylococcus capsulatus (Bath).</title>
        <authorList>
            <person name="Ward N.L."/>
            <person name="Larsen O."/>
            <person name="Sakwa J."/>
            <person name="Bruseth L."/>
            <person name="Khouri H.M."/>
            <person name="Durkin A.S."/>
            <person name="Dimitrov G."/>
            <person name="Jiang L."/>
            <person name="Scanlan D."/>
            <person name="Kang K.H."/>
            <person name="Lewis M.R."/>
            <person name="Nelson K.E."/>
            <person name="Methe B.A."/>
            <person name="Wu M."/>
            <person name="Heidelberg J.F."/>
            <person name="Paulsen I.T."/>
            <person name="Fouts D.E."/>
            <person name="Ravel J."/>
            <person name="Tettelin H."/>
            <person name="Ren Q."/>
            <person name="Read T.D."/>
            <person name="DeBoy R.T."/>
            <person name="Seshadri R."/>
            <person name="Salzberg S.L."/>
            <person name="Jensen H.B."/>
            <person name="Birkeland N.K."/>
            <person name="Nelson W.C."/>
            <person name="Dodson R.J."/>
            <person name="Grindhaug S.H."/>
            <person name="Holt I.E."/>
            <person name="Eidhammer I."/>
            <person name="Jonasen I."/>
            <person name="Vanaken S."/>
            <person name="Utterback T.R."/>
            <person name="Feldblyum T.V."/>
            <person name="Fraser C.M."/>
            <person name="Lillehaug J.R."/>
            <person name="Eisen J.A."/>
        </authorList>
    </citation>
    <scope>NUCLEOTIDE SEQUENCE [LARGE SCALE GENOMIC DNA]</scope>
    <source>
        <strain>ATCC 33009 / NCIMB 11132 / Bath</strain>
    </source>
</reference>
<name>NPD_METCA</name>
<keyword id="KW-0963">Cytoplasm</keyword>
<keyword id="KW-0479">Metal-binding</keyword>
<keyword id="KW-0520">NAD</keyword>
<keyword id="KW-1185">Reference proteome</keyword>
<keyword id="KW-0808">Transferase</keyword>
<keyword id="KW-0862">Zinc</keyword>
<evidence type="ECO:0000255" key="1">
    <source>
        <dbReference type="HAMAP-Rule" id="MF_01121"/>
    </source>
</evidence>
<evidence type="ECO:0000255" key="2">
    <source>
        <dbReference type="PROSITE-ProRule" id="PRU00236"/>
    </source>
</evidence>
<organism>
    <name type="scientific">Methylococcus capsulatus (strain ATCC 33009 / NCIMB 11132 / Bath)</name>
    <dbReference type="NCBI Taxonomy" id="243233"/>
    <lineage>
        <taxon>Bacteria</taxon>
        <taxon>Pseudomonadati</taxon>
        <taxon>Pseudomonadota</taxon>
        <taxon>Gammaproteobacteria</taxon>
        <taxon>Methylococcales</taxon>
        <taxon>Methylococcaceae</taxon>
        <taxon>Methylococcus</taxon>
    </lineage>
</organism>
<proteinExistence type="inferred from homology"/>
<feature type="chain" id="PRO_0000110328" description="NAD-dependent protein deacylase">
    <location>
        <begin position="1"/>
        <end position="255"/>
    </location>
</feature>
<feature type="domain" description="Deacetylase sirtuin-type" evidence="2">
    <location>
        <begin position="1"/>
        <end position="253"/>
    </location>
</feature>
<feature type="active site" description="Proton acceptor" evidence="2">
    <location>
        <position position="119"/>
    </location>
</feature>
<feature type="binding site" evidence="1">
    <location>
        <begin position="22"/>
        <end position="42"/>
    </location>
    <ligand>
        <name>NAD(+)</name>
        <dbReference type="ChEBI" id="CHEBI:57540"/>
    </ligand>
</feature>
<feature type="binding site" evidence="1">
    <location>
        <position position="67"/>
    </location>
    <ligand>
        <name>substrate</name>
    </ligand>
</feature>
<feature type="binding site" evidence="1">
    <location>
        <position position="70"/>
    </location>
    <ligand>
        <name>substrate</name>
    </ligand>
</feature>
<feature type="binding site" evidence="1">
    <location>
        <begin position="101"/>
        <end position="104"/>
    </location>
    <ligand>
        <name>NAD(+)</name>
        <dbReference type="ChEBI" id="CHEBI:57540"/>
    </ligand>
</feature>
<feature type="binding site" evidence="1">
    <location>
        <position position="127"/>
    </location>
    <ligand>
        <name>Zn(2+)</name>
        <dbReference type="ChEBI" id="CHEBI:29105"/>
    </ligand>
</feature>
<feature type="binding site" evidence="1">
    <location>
        <position position="130"/>
    </location>
    <ligand>
        <name>Zn(2+)</name>
        <dbReference type="ChEBI" id="CHEBI:29105"/>
    </ligand>
</feature>
<feature type="binding site" evidence="1">
    <location>
        <position position="155"/>
    </location>
    <ligand>
        <name>Zn(2+)</name>
        <dbReference type="ChEBI" id="CHEBI:29105"/>
    </ligand>
</feature>
<feature type="binding site" evidence="1">
    <location>
        <position position="158"/>
    </location>
    <ligand>
        <name>Zn(2+)</name>
        <dbReference type="ChEBI" id="CHEBI:29105"/>
    </ligand>
</feature>
<feature type="binding site" evidence="1">
    <location>
        <begin position="195"/>
        <end position="197"/>
    </location>
    <ligand>
        <name>NAD(+)</name>
        <dbReference type="ChEBI" id="CHEBI:57540"/>
    </ligand>
</feature>
<feature type="binding site" evidence="1">
    <location>
        <begin position="221"/>
        <end position="223"/>
    </location>
    <ligand>
        <name>NAD(+)</name>
        <dbReference type="ChEBI" id="CHEBI:57540"/>
    </ligand>
</feature>
<feature type="binding site" evidence="1">
    <location>
        <position position="239"/>
    </location>
    <ligand>
        <name>NAD(+)</name>
        <dbReference type="ChEBI" id="CHEBI:57540"/>
    </ligand>
</feature>